<dbReference type="EC" id="2.5.1.96" evidence="2"/>
<dbReference type="EMBL" id="BA000018">
    <property type="protein sequence ID" value="BAB43653.1"/>
    <property type="molecule type" value="Genomic_DNA"/>
</dbReference>
<dbReference type="PIR" id="C90061">
    <property type="entry name" value="C90061"/>
</dbReference>
<dbReference type="RefSeq" id="WP_000178308.1">
    <property type="nucleotide sequence ID" value="NC_002745.2"/>
</dbReference>
<dbReference type="SMR" id="Q7A3E1"/>
<dbReference type="EnsemblBacteria" id="BAB43653">
    <property type="protein sequence ID" value="BAB43653"/>
    <property type="gene ID" value="BAB43653"/>
</dbReference>
<dbReference type="KEGG" id="sau:SA2349"/>
<dbReference type="HOGENOM" id="CLU_037269_1_3_9"/>
<dbReference type="UniPathway" id="UPA00029">
    <property type="reaction ID" value="UER00556"/>
</dbReference>
<dbReference type="GO" id="GO:0004311">
    <property type="term" value="F:geranylgeranyl diphosphate synthase activity"/>
    <property type="evidence" value="ECO:0007669"/>
    <property type="project" value="InterPro"/>
</dbReference>
<dbReference type="GO" id="GO:0046872">
    <property type="term" value="F:metal ion binding"/>
    <property type="evidence" value="ECO:0007669"/>
    <property type="project" value="UniProtKB-KW"/>
</dbReference>
<dbReference type="GO" id="GO:0051996">
    <property type="term" value="F:squalene synthase [NAD(P)H] activity"/>
    <property type="evidence" value="ECO:0007669"/>
    <property type="project" value="InterPro"/>
</dbReference>
<dbReference type="GO" id="GO:0016117">
    <property type="term" value="P:carotenoid biosynthetic process"/>
    <property type="evidence" value="ECO:0007669"/>
    <property type="project" value="UniProtKB-KW"/>
</dbReference>
<dbReference type="CDD" id="cd00683">
    <property type="entry name" value="Trans_IPPS_HH"/>
    <property type="match status" value="1"/>
</dbReference>
<dbReference type="FunFam" id="1.10.600.10:FF:000028">
    <property type="entry name" value="Dehydrosqualene synthase"/>
    <property type="match status" value="1"/>
</dbReference>
<dbReference type="Gene3D" id="1.10.600.10">
    <property type="entry name" value="Farnesyl Diphosphate Synthase"/>
    <property type="match status" value="1"/>
</dbReference>
<dbReference type="InterPro" id="IPR008949">
    <property type="entry name" value="Isoprenoid_synthase_dom_sf"/>
</dbReference>
<dbReference type="InterPro" id="IPR002060">
    <property type="entry name" value="Squ/phyt_synthse"/>
</dbReference>
<dbReference type="InterPro" id="IPR019845">
    <property type="entry name" value="Squalene/phytoene_synthase_CS"/>
</dbReference>
<dbReference type="InterPro" id="IPR044843">
    <property type="entry name" value="Trans_IPPS_bact-type"/>
</dbReference>
<dbReference type="InterPro" id="IPR033904">
    <property type="entry name" value="Trans_IPPS_HH"/>
</dbReference>
<dbReference type="PANTHER" id="PTHR31480">
    <property type="entry name" value="BIFUNCTIONAL LYCOPENE CYCLASE/PHYTOENE SYNTHASE"/>
    <property type="match status" value="1"/>
</dbReference>
<dbReference type="Pfam" id="PF00494">
    <property type="entry name" value="SQS_PSY"/>
    <property type="match status" value="1"/>
</dbReference>
<dbReference type="SFLD" id="SFLDG01212">
    <property type="entry name" value="Phytoene_synthase_like"/>
    <property type="match status" value="1"/>
</dbReference>
<dbReference type="SFLD" id="SFLDG01018">
    <property type="entry name" value="Squalene/Phytoene_Synthase_Lik"/>
    <property type="match status" value="1"/>
</dbReference>
<dbReference type="SUPFAM" id="SSF48576">
    <property type="entry name" value="Terpenoid synthases"/>
    <property type="match status" value="1"/>
</dbReference>
<dbReference type="PROSITE" id="PS01044">
    <property type="entry name" value="SQUALEN_PHYTOEN_SYN_1"/>
    <property type="match status" value="1"/>
</dbReference>
<accession>Q7A3E1</accession>
<evidence type="ECO:0000250" key="1">
    <source>
        <dbReference type="UniProtKB" id="A9JQL9"/>
    </source>
</evidence>
<evidence type="ECO:0000250" key="2">
    <source>
        <dbReference type="UniProtKB" id="Q2FV59"/>
    </source>
</evidence>
<evidence type="ECO:0000305" key="3"/>
<protein>
    <recommendedName>
        <fullName evidence="2">4,4'-diapophytoene synthase</fullName>
        <shortName evidence="2">DAP synthase</shortName>
        <ecNumber evidence="2">2.5.1.96</ecNumber>
    </recommendedName>
    <alternativeName>
        <fullName evidence="2">C30 carotenoid synthase</fullName>
    </alternativeName>
    <alternativeName>
        <fullName evidence="2">Dehydrosqualene synthase</fullName>
    </alternativeName>
</protein>
<sequence>MTMMDMNFKYCHKIMKKHSKSFSYAFDLLPEDQRKAVWAIYAVCRKIDDSIDVYGDIQFLNQIKEDIQSIEKYPYEHHHFQSDRRIMMALQHVAQHKNIAFQSFYNLIDTVYKDQHFTMFETDAELFGYCYGVAGTVGEVLTPILSDHETHQTYDVARRLGESLQLINILRDVGEDFDNERVYFSKQRLKQYEVDIAEVYQNGVNNHYIDLWEYYAAIAEKDFQDVMDQIKVFSIEAQPIIELAARIYIEILDEVRQANYTLHERVFVDKRKKAKLFHEINSKYHRI</sequence>
<gene>
    <name type="primary">crtM</name>
    <name type="ordered locus">SA2349</name>
</gene>
<proteinExistence type="inferred from homology"/>
<comment type="function">
    <text evidence="2">Involved in the biosynthesis of the yellow-orange carotenoid staphyloxanthin, which plays a role in the virulence via its protective function against oxidative stress. Catalyzes the head-to-head condensation of two molecules of farnesyl diphosphate (FPP) into the colorless C(30) carotenoid 4,4'-diapophytoene (dehydrosqualene).</text>
</comment>
<comment type="catalytic activity">
    <reaction evidence="2">
        <text>2 (2E,6E)-farnesyl diphosphate = 15-cis-4,4'-diapophytoene + 2 diphosphate</text>
        <dbReference type="Rhea" id="RHEA:31547"/>
        <dbReference type="ChEBI" id="CHEBI:33019"/>
        <dbReference type="ChEBI" id="CHEBI:62738"/>
        <dbReference type="ChEBI" id="CHEBI:175763"/>
        <dbReference type="EC" id="2.5.1.96"/>
    </reaction>
</comment>
<comment type="cofactor">
    <cofactor evidence="1">
        <name>Mg(2+)</name>
        <dbReference type="ChEBI" id="CHEBI:18420"/>
    </cofactor>
    <text evidence="1">Binds 2 Mg(2+) ions per subunit.</text>
</comment>
<comment type="pathway">
    <text evidence="2">Carotenoid biosynthesis; staphyloxanthin biosynthesis; staphyloxanthin from farnesyl diphosphate: step 1/5.</text>
</comment>
<comment type="similarity">
    <text evidence="3">Belongs to the phytoene/squalene synthase family. CrtM subfamily.</text>
</comment>
<feature type="chain" id="PRO_0000282621" description="4,4'-diapophytoene synthase">
    <location>
        <begin position="1"/>
        <end position="287"/>
    </location>
</feature>
<feature type="binding site" evidence="1">
    <location>
        <begin position="18"/>
        <end position="21"/>
    </location>
    <ligand>
        <name>(2E,6E)-farnesyl diphosphate</name>
        <dbReference type="ChEBI" id="CHEBI:175763"/>
        <label>1</label>
    </ligand>
</feature>
<feature type="binding site" evidence="1">
    <location>
        <position position="41"/>
    </location>
    <ligand>
        <name>(2E,6E)-farnesyl diphosphate</name>
        <dbReference type="ChEBI" id="CHEBI:175763"/>
        <label>1</label>
    </ligand>
</feature>
<feature type="binding site" evidence="1">
    <location>
        <position position="45"/>
    </location>
    <ligand>
        <name>(2E,6E)-farnesyl diphosphate</name>
        <dbReference type="ChEBI" id="CHEBI:175763"/>
        <label>1</label>
    </ligand>
</feature>
<feature type="binding site" evidence="1">
    <location>
        <position position="45"/>
    </location>
    <ligand>
        <name>(2E,6E)-farnesyl diphosphate</name>
        <dbReference type="ChEBI" id="CHEBI:175763"/>
        <label>2</label>
    </ligand>
</feature>
<feature type="binding site" evidence="1">
    <location>
        <position position="48"/>
    </location>
    <ligand>
        <name>Mg(2+)</name>
        <dbReference type="ChEBI" id="CHEBI:18420"/>
        <label>1</label>
    </ligand>
</feature>
<feature type="binding site" evidence="1">
    <location>
        <position position="52"/>
    </location>
    <ligand>
        <name>Mg(2+)</name>
        <dbReference type="ChEBI" id="CHEBI:18420"/>
        <label>1</label>
    </ligand>
</feature>
<feature type="binding site" evidence="1">
    <location>
        <position position="165"/>
    </location>
    <ligand>
        <name>(2E,6E)-farnesyl diphosphate</name>
        <dbReference type="ChEBI" id="CHEBI:175763"/>
        <label>2</label>
    </ligand>
</feature>
<feature type="binding site" evidence="1">
    <location>
        <position position="168"/>
    </location>
    <ligand>
        <name>Mg(2+)</name>
        <dbReference type="ChEBI" id="CHEBI:18420"/>
        <label>2</label>
    </ligand>
</feature>
<feature type="binding site" evidence="1">
    <location>
        <position position="171"/>
    </location>
    <ligand>
        <name>(2E,6E)-farnesyl diphosphate</name>
        <dbReference type="ChEBI" id="CHEBI:175763"/>
        <label>1</label>
    </ligand>
</feature>
<feature type="binding site" evidence="1">
    <location>
        <position position="172"/>
    </location>
    <ligand>
        <name>Mg(2+)</name>
        <dbReference type="ChEBI" id="CHEBI:18420"/>
        <label>2</label>
    </ligand>
</feature>
<feature type="binding site" evidence="1">
    <location>
        <position position="248"/>
    </location>
    <ligand>
        <name>(2E,6E)-farnesyl diphosphate</name>
        <dbReference type="ChEBI" id="CHEBI:175763"/>
        <label>1</label>
    </ligand>
</feature>
<reference key="1">
    <citation type="journal article" date="2001" name="Lancet">
        <title>Whole genome sequencing of meticillin-resistant Staphylococcus aureus.</title>
        <authorList>
            <person name="Kuroda M."/>
            <person name="Ohta T."/>
            <person name="Uchiyama I."/>
            <person name="Baba T."/>
            <person name="Yuzawa H."/>
            <person name="Kobayashi I."/>
            <person name="Cui L."/>
            <person name="Oguchi A."/>
            <person name="Aoki K."/>
            <person name="Nagai Y."/>
            <person name="Lian J.-Q."/>
            <person name="Ito T."/>
            <person name="Kanamori M."/>
            <person name="Matsumaru H."/>
            <person name="Maruyama A."/>
            <person name="Murakami H."/>
            <person name="Hosoyama A."/>
            <person name="Mizutani-Ui Y."/>
            <person name="Takahashi N.K."/>
            <person name="Sawano T."/>
            <person name="Inoue R."/>
            <person name="Kaito C."/>
            <person name="Sekimizu K."/>
            <person name="Hirakawa H."/>
            <person name="Kuhara S."/>
            <person name="Goto S."/>
            <person name="Yabuzaki J."/>
            <person name="Kanehisa M."/>
            <person name="Yamashita A."/>
            <person name="Oshima K."/>
            <person name="Furuya K."/>
            <person name="Yoshino C."/>
            <person name="Shiba T."/>
            <person name="Hattori M."/>
            <person name="Ogasawara N."/>
            <person name="Hayashi H."/>
            <person name="Hiramatsu K."/>
        </authorList>
    </citation>
    <scope>NUCLEOTIDE SEQUENCE [LARGE SCALE GENOMIC DNA]</scope>
    <source>
        <strain>N315</strain>
    </source>
</reference>
<name>CRTM_STAAN</name>
<keyword id="KW-0125">Carotenoid biosynthesis</keyword>
<keyword id="KW-0460">Magnesium</keyword>
<keyword id="KW-0479">Metal-binding</keyword>
<keyword id="KW-0808">Transferase</keyword>
<keyword id="KW-0843">Virulence</keyword>
<organism>
    <name type="scientific">Staphylococcus aureus (strain N315)</name>
    <dbReference type="NCBI Taxonomy" id="158879"/>
    <lineage>
        <taxon>Bacteria</taxon>
        <taxon>Bacillati</taxon>
        <taxon>Bacillota</taxon>
        <taxon>Bacilli</taxon>
        <taxon>Bacillales</taxon>
        <taxon>Staphylococcaceae</taxon>
        <taxon>Staphylococcus</taxon>
    </lineage>
</organism>